<organism>
    <name type="scientific">Wolbachia pipientis wMel</name>
    <dbReference type="NCBI Taxonomy" id="163164"/>
    <lineage>
        <taxon>Bacteria</taxon>
        <taxon>Pseudomonadati</taxon>
        <taxon>Pseudomonadota</taxon>
        <taxon>Alphaproteobacteria</taxon>
        <taxon>Rickettsiales</taxon>
        <taxon>Anaplasmataceae</taxon>
        <taxon>Wolbachieae</taxon>
        <taxon>Wolbachia</taxon>
    </lineage>
</organism>
<name>SYH_WOLPM</name>
<sequence length="408" mass="46541">MTNQTVRGTKDLLFDEWYKFKYIEQTANRISSLYGFLPAQTPIFECTEVFTKTLGDSSDIITKEMYSFNDKGGKSITLRPEFTAAIVRLLIEKKLQTPIKLFSTGPAFRYERPQKGRQRQFHQINFEVFGIEDPKADIELISLAQHLLTEFGINKNVKLEINSLGDGETITKYREALILYFTKYQNDLSEDSKNRLIKNPLRILDSKDEKDKSIISDAPKISNYYTKESSDFFEQILNGLTILDIPYTVNNKLVRGLDYYCHTVFEFVTEDLGAQGAVFAGGRYDNLVSSVGGKHTPAIGFAGGIERIMELINYSPKEERPIYLIPIGREAEKHALTLANELRRNGLYVIYEYSGTLRTRMKKANQANAKAALIFGDEELSSKTLKIKNMDTGEEKIIARDNTIENIY</sequence>
<comment type="catalytic activity">
    <reaction evidence="1">
        <text>tRNA(His) + L-histidine + ATP = L-histidyl-tRNA(His) + AMP + diphosphate + H(+)</text>
        <dbReference type="Rhea" id="RHEA:17313"/>
        <dbReference type="Rhea" id="RHEA-COMP:9665"/>
        <dbReference type="Rhea" id="RHEA-COMP:9689"/>
        <dbReference type="ChEBI" id="CHEBI:15378"/>
        <dbReference type="ChEBI" id="CHEBI:30616"/>
        <dbReference type="ChEBI" id="CHEBI:33019"/>
        <dbReference type="ChEBI" id="CHEBI:57595"/>
        <dbReference type="ChEBI" id="CHEBI:78442"/>
        <dbReference type="ChEBI" id="CHEBI:78527"/>
        <dbReference type="ChEBI" id="CHEBI:456215"/>
        <dbReference type="EC" id="6.1.1.21"/>
    </reaction>
</comment>
<comment type="subunit">
    <text evidence="1">Homodimer.</text>
</comment>
<comment type="subcellular location">
    <subcellularLocation>
        <location evidence="1">Cytoplasm</location>
    </subcellularLocation>
</comment>
<comment type="similarity">
    <text evidence="1">Belongs to the class-II aminoacyl-tRNA synthetase family.</text>
</comment>
<accession>P62351</accession>
<gene>
    <name evidence="1" type="primary">hisS</name>
    <name type="ordered locus">WD_1076</name>
</gene>
<evidence type="ECO:0000255" key="1">
    <source>
        <dbReference type="HAMAP-Rule" id="MF_00127"/>
    </source>
</evidence>
<dbReference type="EC" id="6.1.1.21" evidence="1"/>
<dbReference type="EMBL" id="AE017196">
    <property type="protein sequence ID" value="AAS14731.1"/>
    <property type="molecule type" value="Genomic_DNA"/>
</dbReference>
<dbReference type="RefSeq" id="WP_010963026.1">
    <property type="nucleotide sequence ID" value="NZ_OX384529.1"/>
</dbReference>
<dbReference type="SMR" id="P62351"/>
<dbReference type="EnsemblBacteria" id="AAS14731">
    <property type="protein sequence ID" value="AAS14731"/>
    <property type="gene ID" value="WD_1076"/>
</dbReference>
<dbReference type="GeneID" id="70036553"/>
<dbReference type="KEGG" id="wol:WD_1076"/>
<dbReference type="eggNOG" id="COG0124">
    <property type="taxonomic scope" value="Bacteria"/>
</dbReference>
<dbReference type="Proteomes" id="UP000008215">
    <property type="component" value="Chromosome"/>
</dbReference>
<dbReference type="GO" id="GO:0005737">
    <property type="term" value="C:cytoplasm"/>
    <property type="evidence" value="ECO:0007669"/>
    <property type="project" value="UniProtKB-SubCell"/>
</dbReference>
<dbReference type="GO" id="GO:0005524">
    <property type="term" value="F:ATP binding"/>
    <property type="evidence" value="ECO:0007669"/>
    <property type="project" value="UniProtKB-UniRule"/>
</dbReference>
<dbReference type="GO" id="GO:0004821">
    <property type="term" value="F:histidine-tRNA ligase activity"/>
    <property type="evidence" value="ECO:0007669"/>
    <property type="project" value="UniProtKB-UniRule"/>
</dbReference>
<dbReference type="GO" id="GO:0006427">
    <property type="term" value="P:histidyl-tRNA aminoacylation"/>
    <property type="evidence" value="ECO:0007669"/>
    <property type="project" value="UniProtKB-UniRule"/>
</dbReference>
<dbReference type="CDD" id="cd00773">
    <property type="entry name" value="HisRS-like_core"/>
    <property type="match status" value="1"/>
</dbReference>
<dbReference type="Gene3D" id="3.40.50.800">
    <property type="entry name" value="Anticodon-binding domain"/>
    <property type="match status" value="1"/>
</dbReference>
<dbReference type="Gene3D" id="3.30.930.10">
    <property type="entry name" value="Bira Bifunctional Protein, Domain 2"/>
    <property type="match status" value="1"/>
</dbReference>
<dbReference type="HAMAP" id="MF_00127">
    <property type="entry name" value="His_tRNA_synth"/>
    <property type="match status" value="1"/>
</dbReference>
<dbReference type="InterPro" id="IPR006195">
    <property type="entry name" value="aa-tRNA-synth_II"/>
</dbReference>
<dbReference type="InterPro" id="IPR045864">
    <property type="entry name" value="aa-tRNA-synth_II/BPL/LPL"/>
</dbReference>
<dbReference type="InterPro" id="IPR004154">
    <property type="entry name" value="Anticodon-bd"/>
</dbReference>
<dbReference type="InterPro" id="IPR036621">
    <property type="entry name" value="Anticodon-bd_dom_sf"/>
</dbReference>
<dbReference type="InterPro" id="IPR015807">
    <property type="entry name" value="His-tRNA-ligase"/>
</dbReference>
<dbReference type="InterPro" id="IPR041715">
    <property type="entry name" value="HisRS-like_core"/>
</dbReference>
<dbReference type="InterPro" id="IPR004516">
    <property type="entry name" value="HisRS/HisZ"/>
</dbReference>
<dbReference type="NCBIfam" id="TIGR00442">
    <property type="entry name" value="hisS"/>
    <property type="match status" value="1"/>
</dbReference>
<dbReference type="PANTHER" id="PTHR43707:SF1">
    <property type="entry name" value="HISTIDINE--TRNA LIGASE, MITOCHONDRIAL-RELATED"/>
    <property type="match status" value="1"/>
</dbReference>
<dbReference type="PANTHER" id="PTHR43707">
    <property type="entry name" value="HISTIDYL-TRNA SYNTHETASE"/>
    <property type="match status" value="1"/>
</dbReference>
<dbReference type="Pfam" id="PF03129">
    <property type="entry name" value="HGTP_anticodon"/>
    <property type="match status" value="1"/>
</dbReference>
<dbReference type="Pfam" id="PF13393">
    <property type="entry name" value="tRNA-synt_His"/>
    <property type="match status" value="1"/>
</dbReference>
<dbReference type="PIRSF" id="PIRSF001549">
    <property type="entry name" value="His-tRNA_synth"/>
    <property type="match status" value="1"/>
</dbReference>
<dbReference type="SUPFAM" id="SSF52954">
    <property type="entry name" value="Class II aaRS ABD-related"/>
    <property type="match status" value="1"/>
</dbReference>
<dbReference type="SUPFAM" id="SSF55681">
    <property type="entry name" value="Class II aaRS and biotin synthetases"/>
    <property type="match status" value="1"/>
</dbReference>
<dbReference type="PROSITE" id="PS50862">
    <property type="entry name" value="AA_TRNA_LIGASE_II"/>
    <property type="match status" value="1"/>
</dbReference>
<protein>
    <recommendedName>
        <fullName evidence="1">Histidine--tRNA ligase</fullName>
        <ecNumber evidence="1">6.1.1.21</ecNumber>
    </recommendedName>
    <alternativeName>
        <fullName evidence="1">Histidyl-tRNA synthetase</fullName>
        <shortName evidence="1">HisRS</shortName>
    </alternativeName>
</protein>
<feature type="chain" id="PRO_0000136296" description="Histidine--tRNA ligase">
    <location>
        <begin position="1"/>
        <end position="408"/>
    </location>
</feature>
<proteinExistence type="inferred from homology"/>
<keyword id="KW-0030">Aminoacyl-tRNA synthetase</keyword>
<keyword id="KW-0067">ATP-binding</keyword>
<keyword id="KW-0963">Cytoplasm</keyword>
<keyword id="KW-0436">Ligase</keyword>
<keyword id="KW-0547">Nucleotide-binding</keyword>
<keyword id="KW-0648">Protein biosynthesis</keyword>
<reference key="1">
    <citation type="journal article" date="2004" name="PLoS Biol.">
        <title>Phylogenomics of the reproductive parasite Wolbachia pipientis wMel: a streamlined genome overrun by mobile genetic elements.</title>
        <authorList>
            <person name="Wu M."/>
            <person name="Sun L.V."/>
            <person name="Vamathevan J.J."/>
            <person name="Riegler M."/>
            <person name="DeBoy R.T."/>
            <person name="Brownlie J.C."/>
            <person name="McGraw E.A."/>
            <person name="Martin W."/>
            <person name="Esser C."/>
            <person name="Ahmadinejad N."/>
            <person name="Wiegand C."/>
            <person name="Madupu R."/>
            <person name="Beanan M.J."/>
            <person name="Brinkac L.M."/>
            <person name="Daugherty S.C."/>
            <person name="Durkin A.S."/>
            <person name="Kolonay J.F."/>
            <person name="Nelson W.C."/>
            <person name="Mohamoud Y."/>
            <person name="Lee P."/>
            <person name="Berry K.J."/>
            <person name="Young M.B."/>
            <person name="Utterback T.R."/>
            <person name="Weidman J.F."/>
            <person name="Nierman W.C."/>
            <person name="Paulsen I.T."/>
            <person name="Nelson K.E."/>
            <person name="Tettelin H."/>
            <person name="O'Neill S.L."/>
            <person name="Eisen J.A."/>
        </authorList>
    </citation>
    <scope>NUCLEOTIDE SEQUENCE [LARGE SCALE GENOMIC DNA]</scope>
</reference>